<accession>C3NET6</accession>
<sequence length="338" mass="37373">MRLYELSFAQIEDFFYKLAEVKDIIKDSGLMEFLPELKKLDSTIQTGTTRVKHAFPIFQKGGVVMDITNVQQAQIAEEAGAVAVMVLDKLPYDVRKSGGVARMADPKIIGEVMNSITIPVMAKVRIGHYYEAKLLEALGVDMIDESEVLTPADEEHHINKWEFSVPFVNGARNLGEALRRTAEGASMIRTKGEAGTGNVSEAVKHMKIINSEIRSLISMSEEDRVKKAREYQVPYQLVELTAKIKRLPIVNFAAGGIATPADAALMMWLGADGLFVGSGIFKSQDPDERAKAVVLAAACWEYPEIVLEAQKMISEQKSMMGIDIKSLKPEELLQVRGL</sequence>
<proteinExistence type="inferred from homology"/>
<name>PDXS_SACI7</name>
<keyword id="KW-0456">Lyase</keyword>
<keyword id="KW-0663">Pyridoxal phosphate</keyword>
<keyword id="KW-0704">Schiff base</keyword>
<evidence type="ECO:0000255" key="1">
    <source>
        <dbReference type="HAMAP-Rule" id="MF_01824"/>
    </source>
</evidence>
<organism>
    <name type="scientific">Saccharolobus islandicus (strain Y.G.57.14 / Yellowstone #1)</name>
    <name type="common">Sulfolobus islandicus</name>
    <dbReference type="NCBI Taxonomy" id="439386"/>
    <lineage>
        <taxon>Archaea</taxon>
        <taxon>Thermoproteota</taxon>
        <taxon>Thermoprotei</taxon>
        <taxon>Sulfolobales</taxon>
        <taxon>Sulfolobaceae</taxon>
        <taxon>Saccharolobus</taxon>
    </lineage>
</organism>
<protein>
    <recommendedName>
        <fullName evidence="1">Pyridoxal 5'-phosphate synthase subunit PdxS</fullName>
        <shortName evidence="1">PLP synthase subunit PdxS</shortName>
        <ecNumber evidence="1">4.3.3.6</ecNumber>
    </recommendedName>
    <alternativeName>
        <fullName evidence="1">Pdx1</fullName>
    </alternativeName>
</protein>
<comment type="function">
    <text evidence="1">Catalyzes the formation of pyridoxal 5'-phosphate from ribose 5-phosphate (RBP), glyceraldehyde 3-phosphate (G3P) and ammonia. The ammonia is provided by the PdxT subunit. Can also use ribulose 5-phosphate and dihydroxyacetone phosphate as substrates, resulting from enzyme-catalyzed isomerization of RBP and G3P, respectively.</text>
</comment>
<comment type="catalytic activity">
    <reaction evidence="1">
        <text>aldehydo-D-ribose 5-phosphate + D-glyceraldehyde 3-phosphate + L-glutamine = pyridoxal 5'-phosphate + L-glutamate + phosphate + 3 H2O + H(+)</text>
        <dbReference type="Rhea" id="RHEA:31507"/>
        <dbReference type="ChEBI" id="CHEBI:15377"/>
        <dbReference type="ChEBI" id="CHEBI:15378"/>
        <dbReference type="ChEBI" id="CHEBI:29985"/>
        <dbReference type="ChEBI" id="CHEBI:43474"/>
        <dbReference type="ChEBI" id="CHEBI:58273"/>
        <dbReference type="ChEBI" id="CHEBI:58359"/>
        <dbReference type="ChEBI" id="CHEBI:59776"/>
        <dbReference type="ChEBI" id="CHEBI:597326"/>
        <dbReference type="EC" id="4.3.3.6"/>
    </reaction>
</comment>
<comment type="pathway">
    <text evidence="1">Cofactor biosynthesis; pyridoxal 5'-phosphate biosynthesis.</text>
</comment>
<comment type="subunit">
    <text evidence="1">In the presence of PdxT, forms a dodecamer of heterodimers.</text>
</comment>
<comment type="similarity">
    <text evidence="1">Belongs to the PdxS/SNZ family.</text>
</comment>
<reference key="1">
    <citation type="journal article" date="2009" name="Proc. Natl. Acad. Sci. U.S.A.">
        <title>Biogeography of the Sulfolobus islandicus pan-genome.</title>
        <authorList>
            <person name="Reno M.L."/>
            <person name="Held N.L."/>
            <person name="Fields C.J."/>
            <person name="Burke P.V."/>
            <person name="Whitaker R.J."/>
        </authorList>
    </citation>
    <scope>NUCLEOTIDE SEQUENCE [LARGE SCALE GENOMIC DNA]</scope>
    <source>
        <strain>Y.G.57.14 / Yellowstone #1</strain>
    </source>
</reference>
<feature type="chain" id="PRO_1000216066" description="Pyridoxal 5'-phosphate synthase subunit PdxS">
    <location>
        <begin position="1"/>
        <end position="338"/>
    </location>
</feature>
<feature type="active site" description="Schiff-base intermediate with D-ribose 5-phosphate" evidence="1">
    <location>
        <position position="123"/>
    </location>
</feature>
<feature type="binding site" evidence="1">
    <location>
        <position position="66"/>
    </location>
    <ligand>
        <name>D-ribose 5-phosphate</name>
        <dbReference type="ChEBI" id="CHEBI:78346"/>
    </ligand>
</feature>
<feature type="binding site" evidence="1">
    <location>
        <position position="195"/>
    </location>
    <ligand>
        <name>D-ribose 5-phosphate</name>
        <dbReference type="ChEBI" id="CHEBI:78346"/>
    </ligand>
</feature>
<feature type="binding site" evidence="1">
    <location>
        <position position="207"/>
    </location>
    <ligand>
        <name>D-glyceraldehyde 3-phosphate</name>
        <dbReference type="ChEBI" id="CHEBI:59776"/>
    </ligand>
</feature>
<feature type="binding site" evidence="1">
    <location>
        <position position="256"/>
    </location>
    <ligand>
        <name>D-ribose 5-phosphate</name>
        <dbReference type="ChEBI" id="CHEBI:78346"/>
    </ligand>
</feature>
<feature type="binding site" evidence="1">
    <location>
        <begin position="277"/>
        <end position="278"/>
    </location>
    <ligand>
        <name>D-ribose 5-phosphate</name>
        <dbReference type="ChEBI" id="CHEBI:78346"/>
    </ligand>
</feature>
<gene>
    <name evidence="1" type="primary">pdxS</name>
    <name type="ordered locus">YG5714_1563</name>
</gene>
<dbReference type="EC" id="4.3.3.6" evidence="1"/>
<dbReference type="EMBL" id="CP001403">
    <property type="protein sequence ID" value="ACP45825.1"/>
    <property type="molecule type" value="Genomic_DNA"/>
</dbReference>
<dbReference type="RefSeq" id="WP_012711553.1">
    <property type="nucleotide sequence ID" value="NC_012622.1"/>
</dbReference>
<dbReference type="SMR" id="C3NET6"/>
<dbReference type="GeneID" id="84061870"/>
<dbReference type="KEGG" id="siy:YG5714_1563"/>
<dbReference type="HOGENOM" id="CLU_055352_1_0_2"/>
<dbReference type="UniPathway" id="UPA00245"/>
<dbReference type="Proteomes" id="UP000002308">
    <property type="component" value="Chromosome"/>
</dbReference>
<dbReference type="GO" id="GO:0036381">
    <property type="term" value="F:pyridoxal 5'-phosphate synthase (glutamine hydrolysing) activity"/>
    <property type="evidence" value="ECO:0007669"/>
    <property type="project" value="UniProtKB-UniRule"/>
</dbReference>
<dbReference type="GO" id="GO:0006520">
    <property type="term" value="P:amino acid metabolic process"/>
    <property type="evidence" value="ECO:0007669"/>
    <property type="project" value="TreeGrafter"/>
</dbReference>
<dbReference type="GO" id="GO:0042823">
    <property type="term" value="P:pyridoxal phosphate biosynthetic process"/>
    <property type="evidence" value="ECO:0007669"/>
    <property type="project" value="UniProtKB-UniRule"/>
</dbReference>
<dbReference type="GO" id="GO:0008615">
    <property type="term" value="P:pyridoxine biosynthetic process"/>
    <property type="evidence" value="ECO:0007669"/>
    <property type="project" value="TreeGrafter"/>
</dbReference>
<dbReference type="CDD" id="cd04727">
    <property type="entry name" value="pdxS"/>
    <property type="match status" value="1"/>
</dbReference>
<dbReference type="FunFam" id="3.20.20.70:FF:000001">
    <property type="entry name" value="Pyridoxine biosynthesis protein PDX1"/>
    <property type="match status" value="1"/>
</dbReference>
<dbReference type="Gene3D" id="3.20.20.70">
    <property type="entry name" value="Aldolase class I"/>
    <property type="match status" value="1"/>
</dbReference>
<dbReference type="HAMAP" id="MF_01824">
    <property type="entry name" value="PdxS"/>
    <property type="match status" value="1"/>
</dbReference>
<dbReference type="InterPro" id="IPR013785">
    <property type="entry name" value="Aldolase_TIM"/>
</dbReference>
<dbReference type="InterPro" id="IPR001852">
    <property type="entry name" value="PdxS/SNZ"/>
</dbReference>
<dbReference type="InterPro" id="IPR033755">
    <property type="entry name" value="PdxS/SNZ_N"/>
</dbReference>
<dbReference type="InterPro" id="IPR011060">
    <property type="entry name" value="RibuloseP-bd_barrel"/>
</dbReference>
<dbReference type="NCBIfam" id="NF003215">
    <property type="entry name" value="PRK04180.1"/>
    <property type="match status" value="1"/>
</dbReference>
<dbReference type="PANTHER" id="PTHR31829">
    <property type="entry name" value="PYRIDOXAL 5'-PHOSPHATE SYNTHASE SUBUNIT SNZ1-RELATED"/>
    <property type="match status" value="1"/>
</dbReference>
<dbReference type="PANTHER" id="PTHR31829:SF0">
    <property type="entry name" value="PYRIDOXAL 5'-PHOSPHATE SYNTHASE SUBUNIT SNZ1-RELATED"/>
    <property type="match status" value="1"/>
</dbReference>
<dbReference type="Pfam" id="PF01680">
    <property type="entry name" value="SOR_SNZ"/>
    <property type="match status" value="1"/>
</dbReference>
<dbReference type="PIRSF" id="PIRSF029271">
    <property type="entry name" value="Pdx1"/>
    <property type="match status" value="1"/>
</dbReference>
<dbReference type="SUPFAM" id="SSF51366">
    <property type="entry name" value="Ribulose-phoshate binding barrel"/>
    <property type="match status" value="1"/>
</dbReference>
<dbReference type="PROSITE" id="PS01235">
    <property type="entry name" value="PDXS_SNZ_1"/>
    <property type="match status" value="1"/>
</dbReference>
<dbReference type="PROSITE" id="PS51129">
    <property type="entry name" value="PDXS_SNZ_2"/>
    <property type="match status" value="1"/>
</dbReference>